<organism>
    <name type="scientific">Synechococcus elongatus (strain ATCC 33912 / PCC 7942 / FACHB-805)</name>
    <name type="common">Anacystis nidulans R2</name>
    <dbReference type="NCBI Taxonomy" id="1140"/>
    <lineage>
        <taxon>Bacteria</taxon>
        <taxon>Bacillati</taxon>
        <taxon>Cyanobacteriota</taxon>
        <taxon>Cyanophyceae</taxon>
        <taxon>Synechococcales</taxon>
        <taxon>Synechococcaceae</taxon>
        <taxon>Synechococcus</taxon>
    </lineage>
</organism>
<protein>
    <recommendedName>
        <fullName evidence="1">Arginine--tRNA ligase</fullName>
        <ecNumber evidence="1">6.1.1.19</ecNumber>
    </recommendedName>
    <alternativeName>
        <fullName evidence="1">Arginyl-tRNA synthetase</fullName>
        <shortName evidence="1">ArgRS</shortName>
    </alternativeName>
</protein>
<keyword id="KW-0030">Aminoacyl-tRNA synthetase</keyword>
<keyword id="KW-0067">ATP-binding</keyword>
<keyword id="KW-0963">Cytoplasm</keyword>
<keyword id="KW-0436">Ligase</keyword>
<keyword id="KW-0547">Nucleotide-binding</keyword>
<keyword id="KW-0648">Protein biosynthesis</keyword>
<keyword id="KW-1185">Reference proteome</keyword>
<proteinExistence type="inferred from homology"/>
<comment type="catalytic activity">
    <reaction evidence="1">
        <text>tRNA(Arg) + L-arginine + ATP = L-arginyl-tRNA(Arg) + AMP + diphosphate</text>
        <dbReference type="Rhea" id="RHEA:20301"/>
        <dbReference type="Rhea" id="RHEA-COMP:9658"/>
        <dbReference type="Rhea" id="RHEA-COMP:9673"/>
        <dbReference type="ChEBI" id="CHEBI:30616"/>
        <dbReference type="ChEBI" id="CHEBI:32682"/>
        <dbReference type="ChEBI" id="CHEBI:33019"/>
        <dbReference type="ChEBI" id="CHEBI:78442"/>
        <dbReference type="ChEBI" id="CHEBI:78513"/>
        <dbReference type="ChEBI" id="CHEBI:456215"/>
        <dbReference type="EC" id="6.1.1.19"/>
    </reaction>
</comment>
<comment type="subunit">
    <text evidence="1">Monomer.</text>
</comment>
<comment type="subcellular location">
    <subcellularLocation>
        <location evidence="1">Cytoplasm</location>
    </subcellularLocation>
</comment>
<comment type="similarity">
    <text evidence="1">Belongs to the class-I aminoacyl-tRNA synthetase family.</text>
</comment>
<comment type="sequence caution" evidence="2">
    <conflict type="erroneous initiation">
        <sequence resource="EMBL-CDS" id="ABB57607"/>
    </conflict>
</comment>
<reference key="1">
    <citation type="submission" date="2002-06" db="EMBL/GenBank/DDBJ databases">
        <title>Synechococcus elongatus PCC7942 cosmid 6C3.</title>
        <authorList>
            <person name="Holtman C.K."/>
            <person name="Sandoval P."/>
            <person name="Chen Y."/>
            <person name="Socias T."/>
            <person name="Mohler B.J."/>
            <person name="Gonzalez A."/>
            <person name="Salinas I."/>
            <person name="McMurtry S."/>
            <person name="Golden S.S."/>
            <person name="Youderian P."/>
        </authorList>
    </citation>
    <scope>NUCLEOTIDE SEQUENCE [GENOMIC DNA]</scope>
</reference>
<reference key="2">
    <citation type="submission" date="2005-08" db="EMBL/GenBank/DDBJ databases">
        <title>Complete sequence of chromosome 1 of Synechococcus elongatus PCC 7942.</title>
        <authorList>
            <consortium name="US DOE Joint Genome Institute"/>
            <person name="Copeland A."/>
            <person name="Lucas S."/>
            <person name="Lapidus A."/>
            <person name="Barry K."/>
            <person name="Detter J.C."/>
            <person name="Glavina T."/>
            <person name="Hammon N."/>
            <person name="Israni S."/>
            <person name="Pitluck S."/>
            <person name="Schmutz J."/>
            <person name="Larimer F."/>
            <person name="Land M."/>
            <person name="Kyrpides N."/>
            <person name="Lykidis A."/>
            <person name="Golden S."/>
            <person name="Richardson P."/>
        </authorList>
    </citation>
    <scope>NUCLEOTIDE SEQUENCE [LARGE SCALE GENOMIC DNA]</scope>
    <source>
        <strain>ATCC 33912 / PCC 7942 / FACHB-805</strain>
    </source>
</reference>
<dbReference type="EC" id="6.1.1.19" evidence="1"/>
<dbReference type="EMBL" id="AY120852">
    <property type="protein sequence ID" value="AAM82666.1"/>
    <property type="molecule type" value="Genomic_DNA"/>
</dbReference>
<dbReference type="EMBL" id="CP000100">
    <property type="protein sequence ID" value="ABB57607.1"/>
    <property type="status" value="ALT_INIT"/>
    <property type="molecule type" value="Genomic_DNA"/>
</dbReference>
<dbReference type="RefSeq" id="WP_039755959.1">
    <property type="nucleotide sequence ID" value="NZ_JACJTX010000004.1"/>
</dbReference>
<dbReference type="SMR" id="Q8KPU9"/>
<dbReference type="STRING" id="1140.Synpcc7942_1577"/>
<dbReference type="PaxDb" id="1140-Synpcc7942_1577"/>
<dbReference type="GeneID" id="72430385"/>
<dbReference type="KEGG" id="syf:Synpcc7942_1577"/>
<dbReference type="eggNOG" id="COG0018">
    <property type="taxonomic scope" value="Bacteria"/>
</dbReference>
<dbReference type="HOGENOM" id="CLU_006406_5_1_3"/>
<dbReference type="OrthoDB" id="9805987at2"/>
<dbReference type="BioCyc" id="SYNEL:SYNPCC7942_1577-MONOMER"/>
<dbReference type="Proteomes" id="UP000889800">
    <property type="component" value="Chromosome"/>
</dbReference>
<dbReference type="GO" id="GO:0005737">
    <property type="term" value="C:cytoplasm"/>
    <property type="evidence" value="ECO:0007669"/>
    <property type="project" value="UniProtKB-SubCell"/>
</dbReference>
<dbReference type="GO" id="GO:0004814">
    <property type="term" value="F:arginine-tRNA ligase activity"/>
    <property type="evidence" value="ECO:0007669"/>
    <property type="project" value="UniProtKB-UniRule"/>
</dbReference>
<dbReference type="GO" id="GO:0005524">
    <property type="term" value="F:ATP binding"/>
    <property type="evidence" value="ECO:0007669"/>
    <property type="project" value="UniProtKB-UniRule"/>
</dbReference>
<dbReference type="GO" id="GO:0006420">
    <property type="term" value="P:arginyl-tRNA aminoacylation"/>
    <property type="evidence" value="ECO:0007669"/>
    <property type="project" value="UniProtKB-UniRule"/>
</dbReference>
<dbReference type="CDD" id="cd07956">
    <property type="entry name" value="Anticodon_Ia_Arg"/>
    <property type="match status" value="1"/>
</dbReference>
<dbReference type="CDD" id="cd00671">
    <property type="entry name" value="ArgRS_core"/>
    <property type="match status" value="1"/>
</dbReference>
<dbReference type="FunFam" id="3.40.50.620:FF:000030">
    <property type="entry name" value="Arginine--tRNA ligase"/>
    <property type="match status" value="1"/>
</dbReference>
<dbReference type="FunFam" id="1.10.730.10:FF:000006">
    <property type="entry name" value="Arginyl-tRNA synthetase 2, mitochondrial"/>
    <property type="match status" value="1"/>
</dbReference>
<dbReference type="Gene3D" id="3.30.1360.70">
    <property type="entry name" value="Arginyl tRNA synthetase N-terminal domain"/>
    <property type="match status" value="1"/>
</dbReference>
<dbReference type="Gene3D" id="3.40.50.620">
    <property type="entry name" value="HUPs"/>
    <property type="match status" value="1"/>
</dbReference>
<dbReference type="Gene3D" id="1.10.730.10">
    <property type="entry name" value="Isoleucyl-tRNA Synthetase, Domain 1"/>
    <property type="match status" value="1"/>
</dbReference>
<dbReference type="HAMAP" id="MF_00123">
    <property type="entry name" value="Arg_tRNA_synth"/>
    <property type="match status" value="1"/>
</dbReference>
<dbReference type="InterPro" id="IPR001412">
    <property type="entry name" value="aa-tRNA-synth_I_CS"/>
</dbReference>
<dbReference type="InterPro" id="IPR001278">
    <property type="entry name" value="Arg-tRNA-ligase"/>
</dbReference>
<dbReference type="InterPro" id="IPR005148">
    <property type="entry name" value="Arg-tRNA-synth_N"/>
</dbReference>
<dbReference type="InterPro" id="IPR036695">
    <property type="entry name" value="Arg-tRNA-synth_N_sf"/>
</dbReference>
<dbReference type="InterPro" id="IPR035684">
    <property type="entry name" value="ArgRS_core"/>
</dbReference>
<dbReference type="InterPro" id="IPR008909">
    <property type="entry name" value="DALR_anticod-bd"/>
</dbReference>
<dbReference type="InterPro" id="IPR014729">
    <property type="entry name" value="Rossmann-like_a/b/a_fold"/>
</dbReference>
<dbReference type="InterPro" id="IPR009080">
    <property type="entry name" value="tRNAsynth_Ia_anticodon-bd"/>
</dbReference>
<dbReference type="NCBIfam" id="TIGR00456">
    <property type="entry name" value="argS"/>
    <property type="match status" value="1"/>
</dbReference>
<dbReference type="PANTHER" id="PTHR11956:SF5">
    <property type="entry name" value="ARGININE--TRNA LIGASE, CYTOPLASMIC"/>
    <property type="match status" value="1"/>
</dbReference>
<dbReference type="PANTHER" id="PTHR11956">
    <property type="entry name" value="ARGINYL-TRNA SYNTHETASE"/>
    <property type="match status" value="1"/>
</dbReference>
<dbReference type="Pfam" id="PF03485">
    <property type="entry name" value="Arg_tRNA_synt_N"/>
    <property type="match status" value="1"/>
</dbReference>
<dbReference type="Pfam" id="PF05746">
    <property type="entry name" value="DALR_1"/>
    <property type="match status" value="1"/>
</dbReference>
<dbReference type="Pfam" id="PF00750">
    <property type="entry name" value="tRNA-synt_1d"/>
    <property type="match status" value="1"/>
</dbReference>
<dbReference type="PRINTS" id="PR01038">
    <property type="entry name" value="TRNASYNTHARG"/>
</dbReference>
<dbReference type="SMART" id="SM01016">
    <property type="entry name" value="Arg_tRNA_synt_N"/>
    <property type="match status" value="1"/>
</dbReference>
<dbReference type="SMART" id="SM00836">
    <property type="entry name" value="DALR_1"/>
    <property type="match status" value="1"/>
</dbReference>
<dbReference type="SUPFAM" id="SSF47323">
    <property type="entry name" value="Anticodon-binding domain of a subclass of class I aminoacyl-tRNA synthetases"/>
    <property type="match status" value="1"/>
</dbReference>
<dbReference type="SUPFAM" id="SSF55190">
    <property type="entry name" value="Arginyl-tRNA synthetase (ArgRS), N-terminal 'additional' domain"/>
    <property type="match status" value="1"/>
</dbReference>
<dbReference type="SUPFAM" id="SSF52374">
    <property type="entry name" value="Nucleotidylyl transferase"/>
    <property type="match status" value="1"/>
</dbReference>
<dbReference type="PROSITE" id="PS00178">
    <property type="entry name" value="AA_TRNA_LIGASE_I"/>
    <property type="match status" value="1"/>
</dbReference>
<accession>Q8KPU9</accession>
<accession>Q31MW2</accession>
<sequence>MAAPLAQLRDRFQAALAASFGPEWAATDPLLVPATNPKFGDYQSNVAMSLAKQLGQPPRAIAETLVQNLNLADLCEPPAIAGPGFINFTLQPSYLVAQLQQLQTDERLGIQPVSPPQRVIVDFSSPNIAKEMHVGHLRSTIIGDSIARVLEFQGHEVLRLNHVGDWGTQFGMLIAFLQEQYPQALSQPDALDISDLVAFYKQAKARFDEDPSFQETARQRVVDLQSGEATARQAWQLLCDQSRREFQKIYDRLDIQLEERGESFYNPYLPAIVEDLRRLGLLVEDQGAQCVFLEGFQNKEGQPLPLIVQKSDGGYNYATTDLAALRYRLGQDQAQRIIYVTDSGQANHFAQVFQVAQRAGWLPAAAQIEHVPFGLVQGEDGKKLKTRAGDTVRLRDLLDEAVDRARTDLTTRIAAEERSETPEFIEAVAQAVGLGAVKYADLSQNRNSNYIFSFDKMLALQGNTAPYLLYAYVRIQGIARKGGIDFAQLDPVAAVLTEPTERSLAKQVLQLGEVLDEVARDLLPNRLCSYLFELSQTFNQFYDRCPILNAEEPQRTSRLLLCDLTARTLKLGLSLLGISVLERM</sequence>
<evidence type="ECO:0000255" key="1">
    <source>
        <dbReference type="HAMAP-Rule" id="MF_00123"/>
    </source>
</evidence>
<evidence type="ECO:0000305" key="2"/>
<name>SYR_SYNE7</name>
<feature type="chain" id="PRO_0000151625" description="Arginine--tRNA ligase">
    <location>
        <begin position="1"/>
        <end position="584"/>
    </location>
</feature>
<feature type="short sequence motif" description="'HIGH' region">
    <location>
        <begin position="126"/>
        <end position="136"/>
    </location>
</feature>
<feature type="sequence conflict" description="In Ref. 1; AAM82666." evidence="2" ref="1">
    <original>D</original>
    <variation>N</variation>
    <location>
        <position position="516"/>
    </location>
</feature>
<feature type="sequence conflict" description="In Ref. 1; AAM82666." evidence="2" ref="1">
    <original>L</original>
    <variation>V</variation>
    <location>
        <position position="561"/>
    </location>
</feature>
<feature type="sequence conflict" description="In Ref. 1; AAM82666." evidence="2" ref="1">
    <original>A</original>
    <variation>G</variation>
    <location>
        <position position="566"/>
    </location>
</feature>
<gene>
    <name evidence="1" type="primary">argS</name>
    <name type="ordered locus">Synpcc7942_1577</name>
    <name type="ORF">sed0009</name>
</gene>